<comment type="function">
    <text evidence="1">Multidrug efflux pump that functions probably as a Na(+)/drug antiporter.</text>
</comment>
<comment type="subcellular location">
    <subcellularLocation>
        <location evidence="1">Cell inner membrane</location>
        <topology evidence="1">Multi-pass membrane protein</topology>
    </subcellularLocation>
</comment>
<comment type="similarity">
    <text evidence="1">Belongs to the multi antimicrobial extrusion (MATE) (TC 2.A.66.1) family. MdtK subfamily.</text>
</comment>
<organism>
    <name type="scientific">Escherichia coli (strain K12 / MC4100 / BW2952)</name>
    <dbReference type="NCBI Taxonomy" id="595496"/>
    <lineage>
        <taxon>Bacteria</taxon>
        <taxon>Pseudomonadati</taxon>
        <taxon>Pseudomonadota</taxon>
        <taxon>Gammaproteobacteria</taxon>
        <taxon>Enterobacterales</taxon>
        <taxon>Enterobacteriaceae</taxon>
        <taxon>Escherichia</taxon>
    </lineage>
</organism>
<gene>
    <name evidence="1" type="primary">mdtK</name>
    <name type="ordered locus">BWG_1479</name>
</gene>
<reference key="1">
    <citation type="journal article" date="2009" name="J. Bacteriol.">
        <title>Genomic sequencing reveals regulatory mutations and recombinational events in the widely used MC4100 lineage of Escherichia coli K-12.</title>
        <authorList>
            <person name="Ferenci T."/>
            <person name="Zhou Z."/>
            <person name="Betteridge T."/>
            <person name="Ren Y."/>
            <person name="Liu Y."/>
            <person name="Feng L."/>
            <person name="Reeves P.R."/>
            <person name="Wang L."/>
        </authorList>
    </citation>
    <scope>NUCLEOTIDE SEQUENCE [LARGE SCALE GENOMIC DNA]</scope>
    <source>
        <strain>K12 / MC4100 / BW2952</strain>
    </source>
</reference>
<protein>
    <recommendedName>
        <fullName evidence="1">Multidrug resistance protein MdtK</fullName>
    </recommendedName>
    <alternativeName>
        <fullName evidence="1">Multidrug-efflux transporter</fullName>
    </alternativeName>
</protein>
<evidence type="ECO:0000255" key="1">
    <source>
        <dbReference type="HAMAP-Rule" id="MF_00400"/>
    </source>
</evidence>
<keyword id="KW-0050">Antiport</keyword>
<keyword id="KW-0997">Cell inner membrane</keyword>
<keyword id="KW-1003">Cell membrane</keyword>
<keyword id="KW-0406">Ion transport</keyword>
<keyword id="KW-0472">Membrane</keyword>
<keyword id="KW-0915">Sodium</keyword>
<keyword id="KW-0739">Sodium transport</keyword>
<keyword id="KW-0812">Transmembrane</keyword>
<keyword id="KW-1133">Transmembrane helix</keyword>
<keyword id="KW-0813">Transport</keyword>
<feature type="chain" id="PRO_1000205877" description="Multidrug resistance protein MdtK">
    <location>
        <begin position="1"/>
        <end position="457"/>
    </location>
</feature>
<feature type="transmembrane region" description="Helical" evidence="1">
    <location>
        <begin position="11"/>
        <end position="31"/>
    </location>
</feature>
<feature type="transmembrane region" description="Helical" evidence="1">
    <location>
        <begin position="53"/>
        <end position="73"/>
    </location>
</feature>
<feature type="transmembrane region" description="Helical" evidence="1">
    <location>
        <begin position="93"/>
        <end position="113"/>
    </location>
</feature>
<feature type="transmembrane region" description="Helical" evidence="1">
    <location>
        <begin position="127"/>
        <end position="147"/>
    </location>
</feature>
<feature type="transmembrane region" description="Helical" evidence="1">
    <location>
        <begin position="160"/>
        <end position="180"/>
    </location>
</feature>
<feature type="transmembrane region" description="Helical" evidence="1">
    <location>
        <begin position="189"/>
        <end position="209"/>
    </location>
</feature>
<feature type="transmembrane region" description="Helical" evidence="1">
    <location>
        <begin position="243"/>
        <end position="263"/>
    </location>
</feature>
<feature type="transmembrane region" description="Helical" evidence="1">
    <location>
        <begin position="276"/>
        <end position="296"/>
    </location>
</feature>
<feature type="transmembrane region" description="Helical" evidence="1">
    <location>
        <begin position="314"/>
        <end position="334"/>
    </location>
</feature>
<feature type="transmembrane region" description="Helical" evidence="1">
    <location>
        <begin position="350"/>
        <end position="370"/>
    </location>
</feature>
<feature type="transmembrane region" description="Helical" evidence="1">
    <location>
        <begin position="387"/>
        <end position="407"/>
    </location>
</feature>
<feature type="transmembrane region" description="Helical" evidence="1">
    <location>
        <begin position="418"/>
        <end position="438"/>
    </location>
</feature>
<proteinExistence type="inferred from homology"/>
<accession>C4ZYC7</accession>
<sequence>MQKYISEARLLLALAIPVILAQIAQTAMGFVDTVMAGGYSATDMAAVAIGTSIWLPAILFGHGLLLALTPVIAQLNGSGRRERIAHQVRQGFWLAGFVSVLIMLVLWNAGYIIRSMENIDPALADKAVGYLRALLWGAPGYLFFQVARNQCEGLAKTKPGMVMGFIGLLVNIPVNYIFIYGHFGMPELGGVGCGVATAAVYWVMFLAMVSYIKRARSMRDIRNEKGTAKPDPAVMKRLIQLGLPIALALFFEVTLFAVVALLVSPLGIVDVAGHQIALNFSSLMFVLPMSLAAAVTIRVGYRLGQGSTLDAQTAARTGLMVGVCMATLTAIFTVSLREQIALLYNDNPEVVTLAAHLMLLAAVYQISDSIQVIGSGILRGYKDTRSIFYITFTAYWVLGLPSGYILALTDLVVEPMGPAGFWIGFIIGLTSAAIMMMLRMRFLQRLPSAIILQRASR</sequence>
<name>MDTK_ECOBW</name>
<dbReference type="EMBL" id="CP001396">
    <property type="protein sequence ID" value="ACR63819.1"/>
    <property type="molecule type" value="Genomic_DNA"/>
</dbReference>
<dbReference type="RefSeq" id="WP_001174940.1">
    <property type="nucleotide sequence ID" value="NC_012759.1"/>
</dbReference>
<dbReference type="SMR" id="C4ZYC7"/>
<dbReference type="KEGG" id="ebw:BWG_1479"/>
<dbReference type="HOGENOM" id="CLU_012893_6_0_6"/>
<dbReference type="GO" id="GO:0005886">
    <property type="term" value="C:plasma membrane"/>
    <property type="evidence" value="ECO:0007669"/>
    <property type="project" value="UniProtKB-SubCell"/>
</dbReference>
<dbReference type="GO" id="GO:0015297">
    <property type="term" value="F:antiporter activity"/>
    <property type="evidence" value="ECO:0007669"/>
    <property type="project" value="UniProtKB-UniRule"/>
</dbReference>
<dbReference type="GO" id="GO:0042910">
    <property type="term" value="F:xenobiotic transmembrane transporter activity"/>
    <property type="evidence" value="ECO:0007669"/>
    <property type="project" value="UniProtKB-UniRule"/>
</dbReference>
<dbReference type="GO" id="GO:0006814">
    <property type="term" value="P:sodium ion transport"/>
    <property type="evidence" value="ECO:0007669"/>
    <property type="project" value="UniProtKB-UniRule"/>
</dbReference>
<dbReference type="GO" id="GO:0006855">
    <property type="term" value="P:xenobiotic transmembrane transport"/>
    <property type="evidence" value="ECO:0007669"/>
    <property type="project" value="UniProtKB-UniRule"/>
</dbReference>
<dbReference type="CDD" id="cd13131">
    <property type="entry name" value="MATE_NorM_like"/>
    <property type="match status" value="1"/>
</dbReference>
<dbReference type="HAMAP" id="MF_00400">
    <property type="entry name" value="MdtK"/>
    <property type="match status" value="1"/>
</dbReference>
<dbReference type="InterPro" id="IPR002528">
    <property type="entry name" value="MATE_fam"/>
</dbReference>
<dbReference type="InterPro" id="IPR050222">
    <property type="entry name" value="MATE_MdtK"/>
</dbReference>
<dbReference type="InterPro" id="IPR048279">
    <property type="entry name" value="MdtK-like"/>
</dbReference>
<dbReference type="InterPro" id="IPR022913">
    <property type="entry name" value="Multidrug-R_MdtK"/>
</dbReference>
<dbReference type="NCBIfam" id="TIGR00797">
    <property type="entry name" value="matE"/>
    <property type="match status" value="1"/>
</dbReference>
<dbReference type="PANTHER" id="PTHR43298:SF2">
    <property type="entry name" value="FMN_FAD EXPORTER YEEO-RELATED"/>
    <property type="match status" value="1"/>
</dbReference>
<dbReference type="PANTHER" id="PTHR43298">
    <property type="entry name" value="MULTIDRUG RESISTANCE PROTEIN NORM-RELATED"/>
    <property type="match status" value="1"/>
</dbReference>
<dbReference type="Pfam" id="PF01554">
    <property type="entry name" value="MatE"/>
    <property type="match status" value="2"/>
</dbReference>
<dbReference type="PIRSF" id="PIRSF006603">
    <property type="entry name" value="DinF"/>
    <property type="match status" value="1"/>
</dbReference>